<keyword id="KW-0445">Lipid transport</keyword>
<keyword id="KW-0446">Lipid-binding</keyword>
<keyword id="KW-1185">Reference proteome</keyword>
<keyword id="KW-0813">Transport</keyword>
<evidence type="ECO:0000250" key="1"/>
<evidence type="ECO:0000255" key="2">
    <source>
        <dbReference type="PROSITE-ProRule" id="PRU00197"/>
    </source>
</evidence>
<reference key="1">
    <citation type="submission" date="2006-10" db="EMBL/GenBank/DDBJ databases">
        <authorList>
            <consortium name="NIH - Mammalian Gene Collection (MGC) project"/>
        </authorList>
    </citation>
    <scope>NUCLEOTIDE SEQUENCE [LARGE SCALE MRNA]</scope>
    <source>
        <strain>Hereford</strain>
        <tissue>Fetal skin</tissue>
    </source>
</reference>
<feature type="chain" id="PRO_0000280535" description="StAR-related lipid transfer protein 5">
    <location>
        <begin position="1"/>
        <end position="213"/>
    </location>
</feature>
<feature type="domain" description="START" evidence="2">
    <location>
        <begin position="1"/>
        <end position="213"/>
    </location>
</feature>
<comment type="function">
    <text evidence="1">May be involved in the intracellular transport of sterols or other lipids. May bind cholesterol or other sterols (By similarity).</text>
</comment>
<dbReference type="EMBL" id="BC126727">
    <property type="protein sequence ID" value="AAI26728.1"/>
    <property type="molecule type" value="mRNA"/>
</dbReference>
<dbReference type="RefSeq" id="NP_001073734.1">
    <property type="nucleotide sequence ID" value="NM_001080265.1"/>
</dbReference>
<dbReference type="SMR" id="A1A4M6"/>
<dbReference type="FunCoup" id="A1A4M6">
    <property type="interactions" value="250"/>
</dbReference>
<dbReference type="STRING" id="9913.ENSBTAP00000014559"/>
<dbReference type="PaxDb" id="9913-ENSBTAP00000014559"/>
<dbReference type="Ensembl" id="ENSBTAT00000014559.4">
    <property type="protein sequence ID" value="ENSBTAP00000014559.3"/>
    <property type="gene ID" value="ENSBTAG00000010964.4"/>
</dbReference>
<dbReference type="GeneID" id="512369"/>
<dbReference type="KEGG" id="bta:512369"/>
<dbReference type="CTD" id="80765"/>
<dbReference type="VEuPathDB" id="HostDB:ENSBTAG00000010964"/>
<dbReference type="VGNC" id="VGNC:35366">
    <property type="gene designation" value="STARD5"/>
</dbReference>
<dbReference type="eggNOG" id="KOG3845">
    <property type="taxonomic scope" value="Eukaryota"/>
</dbReference>
<dbReference type="GeneTree" id="ENSGT00940000159159"/>
<dbReference type="HOGENOM" id="CLU_093200_1_0_1"/>
<dbReference type="InParanoid" id="A1A4M6"/>
<dbReference type="OMA" id="PQKVWEC"/>
<dbReference type="OrthoDB" id="196858at2759"/>
<dbReference type="Reactome" id="R-BTA-159418">
    <property type="pathway name" value="Recycling of bile acids and salts"/>
</dbReference>
<dbReference type="Proteomes" id="UP000009136">
    <property type="component" value="Chromosome 21"/>
</dbReference>
<dbReference type="Bgee" id="ENSBTAG00000010964">
    <property type="expression patterns" value="Expressed in zone of skin and 101 other cell types or tissues"/>
</dbReference>
<dbReference type="GO" id="GO:0015485">
    <property type="term" value="F:cholesterol binding"/>
    <property type="evidence" value="ECO:0000318"/>
    <property type="project" value="GO_Central"/>
</dbReference>
<dbReference type="GO" id="GO:0120020">
    <property type="term" value="F:cholesterol transfer activity"/>
    <property type="evidence" value="ECO:0000318"/>
    <property type="project" value="GO_Central"/>
</dbReference>
<dbReference type="GO" id="GO:0070508">
    <property type="term" value="P:cholesterol import"/>
    <property type="evidence" value="ECO:0000318"/>
    <property type="project" value="GO_Central"/>
</dbReference>
<dbReference type="FunFam" id="3.30.530.20:FF:000031">
    <property type="entry name" value="StAR-related lipid transfer protein 5"/>
    <property type="match status" value="1"/>
</dbReference>
<dbReference type="Gene3D" id="3.30.530.20">
    <property type="match status" value="1"/>
</dbReference>
<dbReference type="InterPro" id="IPR043556">
    <property type="entry name" value="StARD5/6"/>
</dbReference>
<dbReference type="InterPro" id="IPR023393">
    <property type="entry name" value="START-like_dom_sf"/>
</dbReference>
<dbReference type="InterPro" id="IPR002913">
    <property type="entry name" value="START_lipid-bd_dom"/>
</dbReference>
<dbReference type="PANTHER" id="PTHR46374">
    <property type="entry name" value="PROTEIN CBG07384"/>
    <property type="match status" value="1"/>
</dbReference>
<dbReference type="PANTHER" id="PTHR46374:SF3">
    <property type="entry name" value="STAR-RELATED LIPID TRANSFER PROTEIN 5"/>
    <property type="match status" value="1"/>
</dbReference>
<dbReference type="Pfam" id="PF01852">
    <property type="entry name" value="START"/>
    <property type="match status" value="1"/>
</dbReference>
<dbReference type="SMART" id="SM00234">
    <property type="entry name" value="START"/>
    <property type="match status" value="1"/>
</dbReference>
<dbReference type="SUPFAM" id="SSF55961">
    <property type="entry name" value="Bet v1-like"/>
    <property type="match status" value="1"/>
</dbReference>
<dbReference type="PROSITE" id="PS50848">
    <property type="entry name" value="START"/>
    <property type="match status" value="1"/>
</dbReference>
<accession>A1A4M6</accession>
<name>STAR5_BOVIN</name>
<sequence>MDLATAAQVSEAVAEKMLQYRRDKSGWKICREGNGVSVSWRPSVEFPGNLYKGEGIVNGTPEQVWDCVKPLAGTLRAQWDENVNSFEIIESLTDTLLFSRTTTPSAVMKLISPRDFVDLILVRTYEDGTISSNAANVEHPSCPPNPAYVRGFNHPCGCFCEPLPGEPNKTSLVTFFQTDLSGYLPQSVVDSFFPRSMAGFYANLEKAVKKFFG</sequence>
<gene>
    <name type="primary">STARD5</name>
</gene>
<proteinExistence type="evidence at transcript level"/>
<protein>
    <recommendedName>
        <fullName>StAR-related lipid transfer protein 5</fullName>
    </recommendedName>
    <alternativeName>
        <fullName>START domain-containing protein 5</fullName>
        <shortName>StARD5</shortName>
    </alternativeName>
</protein>
<organism>
    <name type="scientific">Bos taurus</name>
    <name type="common">Bovine</name>
    <dbReference type="NCBI Taxonomy" id="9913"/>
    <lineage>
        <taxon>Eukaryota</taxon>
        <taxon>Metazoa</taxon>
        <taxon>Chordata</taxon>
        <taxon>Craniata</taxon>
        <taxon>Vertebrata</taxon>
        <taxon>Euteleostomi</taxon>
        <taxon>Mammalia</taxon>
        <taxon>Eutheria</taxon>
        <taxon>Laurasiatheria</taxon>
        <taxon>Artiodactyla</taxon>
        <taxon>Ruminantia</taxon>
        <taxon>Pecora</taxon>
        <taxon>Bovidae</taxon>
        <taxon>Bovinae</taxon>
        <taxon>Bos</taxon>
    </lineage>
</organism>